<comment type="function">
    <text evidence="1">An essential GTPase which binds GTP, GDP and possibly (p)ppGpp with moderate affinity, with high nucleotide exchange rates and a fairly low GTP hydrolysis rate. Plays a role in control of the cell cycle, stress response, ribosome biogenesis and in those bacteria that undergo differentiation, in morphogenesis control.</text>
</comment>
<comment type="cofactor">
    <cofactor evidence="1">
        <name>Mg(2+)</name>
        <dbReference type="ChEBI" id="CHEBI:18420"/>
    </cofactor>
</comment>
<comment type="subunit">
    <text evidence="1">Monomer.</text>
</comment>
<comment type="subcellular location">
    <subcellularLocation>
        <location evidence="1">Cytoplasm</location>
    </subcellularLocation>
</comment>
<comment type="similarity">
    <text evidence="1">Belongs to the TRAFAC class OBG-HflX-like GTPase superfamily. OBG GTPase family.</text>
</comment>
<gene>
    <name evidence="1" type="primary">obg</name>
    <name type="ordered locus">APL_0040</name>
</gene>
<dbReference type="EC" id="3.6.5.-" evidence="1"/>
<dbReference type="EMBL" id="CP000569">
    <property type="protein sequence ID" value="ABN73148.1"/>
    <property type="molecule type" value="Genomic_DNA"/>
</dbReference>
<dbReference type="RefSeq" id="WP_009874728.1">
    <property type="nucleotide sequence ID" value="NC_009053.1"/>
</dbReference>
<dbReference type="SMR" id="A3MYB2"/>
<dbReference type="STRING" id="416269.APL_0040"/>
<dbReference type="EnsemblBacteria" id="ABN73148">
    <property type="protein sequence ID" value="ABN73148"/>
    <property type="gene ID" value="APL_0040"/>
</dbReference>
<dbReference type="KEGG" id="apl:APL_0040"/>
<dbReference type="PATRIC" id="fig|416269.6.peg.42"/>
<dbReference type="eggNOG" id="COG0536">
    <property type="taxonomic scope" value="Bacteria"/>
</dbReference>
<dbReference type="HOGENOM" id="CLU_011747_2_0_6"/>
<dbReference type="Proteomes" id="UP000001432">
    <property type="component" value="Chromosome"/>
</dbReference>
<dbReference type="GO" id="GO:0005737">
    <property type="term" value="C:cytoplasm"/>
    <property type="evidence" value="ECO:0007669"/>
    <property type="project" value="UniProtKB-SubCell"/>
</dbReference>
<dbReference type="GO" id="GO:0005525">
    <property type="term" value="F:GTP binding"/>
    <property type="evidence" value="ECO:0007669"/>
    <property type="project" value="UniProtKB-UniRule"/>
</dbReference>
<dbReference type="GO" id="GO:0003924">
    <property type="term" value="F:GTPase activity"/>
    <property type="evidence" value="ECO:0007669"/>
    <property type="project" value="UniProtKB-UniRule"/>
</dbReference>
<dbReference type="GO" id="GO:0000287">
    <property type="term" value="F:magnesium ion binding"/>
    <property type="evidence" value="ECO:0007669"/>
    <property type="project" value="InterPro"/>
</dbReference>
<dbReference type="GO" id="GO:0042254">
    <property type="term" value="P:ribosome biogenesis"/>
    <property type="evidence" value="ECO:0007669"/>
    <property type="project" value="UniProtKB-UniRule"/>
</dbReference>
<dbReference type="CDD" id="cd01898">
    <property type="entry name" value="Obg"/>
    <property type="match status" value="1"/>
</dbReference>
<dbReference type="FunFam" id="2.70.210.12:FF:000001">
    <property type="entry name" value="GTPase Obg"/>
    <property type="match status" value="1"/>
</dbReference>
<dbReference type="Gene3D" id="2.70.210.12">
    <property type="entry name" value="GTP1/OBG domain"/>
    <property type="match status" value="1"/>
</dbReference>
<dbReference type="Gene3D" id="3.40.50.300">
    <property type="entry name" value="P-loop containing nucleotide triphosphate hydrolases"/>
    <property type="match status" value="1"/>
</dbReference>
<dbReference type="HAMAP" id="MF_01454">
    <property type="entry name" value="GTPase_Obg"/>
    <property type="match status" value="1"/>
</dbReference>
<dbReference type="InterPro" id="IPR031167">
    <property type="entry name" value="G_OBG"/>
</dbReference>
<dbReference type="InterPro" id="IPR006073">
    <property type="entry name" value="GTP-bd"/>
</dbReference>
<dbReference type="InterPro" id="IPR014100">
    <property type="entry name" value="GTP-bd_Obg/CgtA"/>
</dbReference>
<dbReference type="InterPro" id="IPR006074">
    <property type="entry name" value="GTP1-OBG_CS"/>
</dbReference>
<dbReference type="InterPro" id="IPR006169">
    <property type="entry name" value="GTP1_OBG_dom"/>
</dbReference>
<dbReference type="InterPro" id="IPR036726">
    <property type="entry name" value="GTP1_OBG_dom_sf"/>
</dbReference>
<dbReference type="InterPro" id="IPR045086">
    <property type="entry name" value="OBG_GTPase"/>
</dbReference>
<dbReference type="InterPro" id="IPR027417">
    <property type="entry name" value="P-loop_NTPase"/>
</dbReference>
<dbReference type="NCBIfam" id="TIGR02729">
    <property type="entry name" value="Obg_CgtA"/>
    <property type="match status" value="1"/>
</dbReference>
<dbReference type="NCBIfam" id="NF008955">
    <property type="entry name" value="PRK12297.1"/>
    <property type="match status" value="1"/>
</dbReference>
<dbReference type="NCBIfam" id="NF008956">
    <property type="entry name" value="PRK12299.1"/>
    <property type="match status" value="1"/>
</dbReference>
<dbReference type="PANTHER" id="PTHR11702">
    <property type="entry name" value="DEVELOPMENTALLY REGULATED GTP-BINDING PROTEIN-RELATED"/>
    <property type="match status" value="1"/>
</dbReference>
<dbReference type="PANTHER" id="PTHR11702:SF31">
    <property type="entry name" value="MITOCHONDRIAL RIBOSOME-ASSOCIATED GTPASE 2"/>
    <property type="match status" value="1"/>
</dbReference>
<dbReference type="Pfam" id="PF01018">
    <property type="entry name" value="GTP1_OBG"/>
    <property type="match status" value="1"/>
</dbReference>
<dbReference type="Pfam" id="PF01926">
    <property type="entry name" value="MMR_HSR1"/>
    <property type="match status" value="1"/>
</dbReference>
<dbReference type="PIRSF" id="PIRSF002401">
    <property type="entry name" value="GTP_bd_Obg/CgtA"/>
    <property type="match status" value="1"/>
</dbReference>
<dbReference type="PRINTS" id="PR00326">
    <property type="entry name" value="GTP1OBG"/>
</dbReference>
<dbReference type="SUPFAM" id="SSF82051">
    <property type="entry name" value="Obg GTP-binding protein N-terminal domain"/>
    <property type="match status" value="1"/>
</dbReference>
<dbReference type="SUPFAM" id="SSF52540">
    <property type="entry name" value="P-loop containing nucleoside triphosphate hydrolases"/>
    <property type="match status" value="1"/>
</dbReference>
<dbReference type="PROSITE" id="PS51710">
    <property type="entry name" value="G_OBG"/>
    <property type="match status" value="1"/>
</dbReference>
<dbReference type="PROSITE" id="PS00905">
    <property type="entry name" value="GTP1_OBG"/>
    <property type="match status" value="1"/>
</dbReference>
<dbReference type="PROSITE" id="PS51883">
    <property type="entry name" value="OBG"/>
    <property type="match status" value="1"/>
</dbReference>
<sequence length="391" mass="43139">MKFIDEALIRVEAGDGGNGCVSFRREKYIPKGGPDGGDGGDGGDVYLIADENLNTLIDYRFEKRYAAGRGENGRSAGCTGHRGNDITLRVPVGTRAIDNDTQEVIGDLTKHGMKMLVAKGGYHGLGNTRFKSSVNRAPRQKTNGTPGEKRDLLLELMLLADVGMLGLPNAGKSTFIRAVSAAKPKVADYPFTTLVPSLGVARVGADRSFVVADIPGLIEGAADGAGLGIRFLKHLERCRVLIHLVDIMPIDESDPAQNISVIESELYQYSEKLSEKPTWLVFNKIDTIGEEEAQARAQEIAEQIGWEGDYYLISAATGQNVQNLTRDIMDFIEANPREVAEENTEADEVKFKWDDYHQQAMQNPIEEDWDNFDDDWSEEDEEGVEFVYTRS</sequence>
<evidence type="ECO:0000255" key="1">
    <source>
        <dbReference type="HAMAP-Rule" id="MF_01454"/>
    </source>
</evidence>
<evidence type="ECO:0000255" key="2">
    <source>
        <dbReference type="PROSITE-ProRule" id="PRU01231"/>
    </source>
</evidence>
<proteinExistence type="inferred from homology"/>
<organism>
    <name type="scientific">Actinobacillus pleuropneumoniae serotype 5b (strain L20)</name>
    <dbReference type="NCBI Taxonomy" id="416269"/>
    <lineage>
        <taxon>Bacteria</taxon>
        <taxon>Pseudomonadati</taxon>
        <taxon>Pseudomonadota</taxon>
        <taxon>Gammaproteobacteria</taxon>
        <taxon>Pasteurellales</taxon>
        <taxon>Pasteurellaceae</taxon>
        <taxon>Actinobacillus</taxon>
    </lineage>
</organism>
<name>OBG_ACTP2</name>
<keyword id="KW-0963">Cytoplasm</keyword>
<keyword id="KW-0342">GTP-binding</keyword>
<keyword id="KW-0378">Hydrolase</keyword>
<keyword id="KW-0460">Magnesium</keyword>
<keyword id="KW-0479">Metal-binding</keyword>
<keyword id="KW-0547">Nucleotide-binding</keyword>
<keyword id="KW-1185">Reference proteome</keyword>
<feature type="chain" id="PRO_0000385673" description="GTPase Obg">
    <location>
        <begin position="1"/>
        <end position="391"/>
    </location>
</feature>
<feature type="domain" description="Obg" evidence="2">
    <location>
        <begin position="1"/>
        <end position="159"/>
    </location>
</feature>
<feature type="domain" description="OBG-type G" evidence="1">
    <location>
        <begin position="160"/>
        <end position="333"/>
    </location>
</feature>
<feature type="binding site" evidence="1">
    <location>
        <begin position="166"/>
        <end position="173"/>
    </location>
    <ligand>
        <name>GTP</name>
        <dbReference type="ChEBI" id="CHEBI:37565"/>
    </ligand>
</feature>
<feature type="binding site" evidence="1">
    <location>
        <position position="173"/>
    </location>
    <ligand>
        <name>Mg(2+)</name>
        <dbReference type="ChEBI" id="CHEBI:18420"/>
    </ligand>
</feature>
<feature type="binding site" evidence="1">
    <location>
        <begin position="191"/>
        <end position="195"/>
    </location>
    <ligand>
        <name>GTP</name>
        <dbReference type="ChEBI" id="CHEBI:37565"/>
    </ligand>
</feature>
<feature type="binding site" evidence="1">
    <location>
        <position position="193"/>
    </location>
    <ligand>
        <name>Mg(2+)</name>
        <dbReference type="ChEBI" id="CHEBI:18420"/>
    </ligand>
</feature>
<feature type="binding site" evidence="1">
    <location>
        <begin position="213"/>
        <end position="216"/>
    </location>
    <ligand>
        <name>GTP</name>
        <dbReference type="ChEBI" id="CHEBI:37565"/>
    </ligand>
</feature>
<feature type="binding site" evidence="1">
    <location>
        <begin position="283"/>
        <end position="286"/>
    </location>
    <ligand>
        <name>GTP</name>
        <dbReference type="ChEBI" id="CHEBI:37565"/>
    </ligand>
</feature>
<feature type="binding site" evidence="1">
    <location>
        <begin position="314"/>
        <end position="316"/>
    </location>
    <ligand>
        <name>GTP</name>
        <dbReference type="ChEBI" id="CHEBI:37565"/>
    </ligand>
</feature>
<reference key="1">
    <citation type="journal article" date="2008" name="J. Bacteriol.">
        <title>The complete genome sequence of Actinobacillus pleuropneumoniae L20 (serotype 5b).</title>
        <authorList>
            <person name="Foote S.J."/>
            <person name="Bosse J.T."/>
            <person name="Bouevitch A.B."/>
            <person name="Langford P.R."/>
            <person name="Young N.M."/>
            <person name="Nash J.H.E."/>
        </authorList>
    </citation>
    <scope>NUCLEOTIDE SEQUENCE [LARGE SCALE GENOMIC DNA]</scope>
    <source>
        <strain>L20</strain>
    </source>
</reference>
<protein>
    <recommendedName>
        <fullName evidence="1">GTPase Obg</fullName>
        <ecNumber evidence="1">3.6.5.-</ecNumber>
    </recommendedName>
    <alternativeName>
        <fullName evidence="1">GTP-binding protein Obg</fullName>
    </alternativeName>
</protein>
<accession>A3MYB2</accession>